<keyword id="KW-0007">Acetylation</keyword>
<keyword id="KW-0158">Chromosome</keyword>
<keyword id="KW-0238">DNA-binding</keyword>
<keyword id="KW-0488">Methylation</keyword>
<keyword id="KW-0544">Nucleosome core</keyword>
<keyword id="KW-0539">Nucleus</keyword>
<keyword id="KW-0597">Phosphoprotein</keyword>
<keyword id="KW-1185">Reference proteome</keyword>
<protein>
    <recommendedName>
        <fullName>Histone H3</fullName>
    </recommendedName>
</protein>
<evidence type="ECO:0000250" key="1"/>
<evidence type="ECO:0000256" key="2">
    <source>
        <dbReference type="SAM" id="MobiDB-lite"/>
    </source>
</evidence>
<evidence type="ECO:0000269" key="3">
    <source>
    </source>
</evidence>
<evidence type="ECO:0000305" key="4"/>
<sequence>MARTKQTARKSTGGKAPRKQLASKAARKSAPSTGGVKKPHRYKPGTVALREIRRYQKSTELLIRKLPFQRLVREIAQDFKSDLRFQSSAIGALQESVESYLVSLFEDTNLCAIHAKRVTIQSKDIQLARRLRGERN</sequence>
<gene>
    <name type="primary">hh3</name>
    <name type="ORF">B7K22.030</name>
    <name type="ORF">NCU01635</name>
</gene>
<comment type="function">
    <text>Core component of nucleosome. Nucleosomes wrap and compact DNA into chromatin, limiting DNA accessibility to the cellular machineries which require DNA as a template. Histones thereby play a central role in transcription regulation, DNA repair, DNA replication and chromosomal stability. DNA accessibility is regulated via a complex set of post-translational modifications of histones, also called histone code, and nucleosome remodeling.</text>
</comment>
<comment type="subunit">
    <text>The nucleosome is a histone octamer containing two molecules each of H2A, H2B, H3 and H4 assembled in one H3-H4 heterotetramer and two H2A-H2B heterodimers. The octamer wraps approximately 147 bp of DNA.</text>
</comment>
<comment type="interaction">
    <interactant intactId="EBI-1270655">
        <id>P07041</id>
    </interactant>
    <interactant intactId="EBI-1268994">
        <id>Q8X225</id>
        <label>dim-5</label>
    </interactant>
    <organismsDiffer>false</organismsDiffer>
    <experiments>2</experiments>
</comment>
<comment type="subcellular location">
    <subcellularLocation>
        <location evidence="1">Nucleus</location>
    </subcellularLocation>
    <subcellularLocation>
        <location evidence="1">Chromosome</location>
    </subcellularLocation>
</comment>
<comment type="PTM">
    <text evidence="1">Phosphorylated to form H3S10ph. H3S10ph promotes subsequent H3K14ac formation and is required for transcriptional activation through TBP recruitment to the promoters (By similarity).</text>
</comment>
<comment type="PTM">
    <text evidence="1">Mono-, di- and trimethylated by the COMPASS complex to form H3K4me1/2/3. H3K4me activates gene expression by regulating transcription elongation and plays a role in telomere length maintenance. H3K4me enrichment correlates with transcription levels, and occurs in a 5' to 3' gradient with H3K4me3 enrichment at the 5'-end of genes, shifting to H3K4me2 and then H3K4me1. Trimethylated by methyltransferase dim-5 to form H3K9me3. H3K9me3, but not H3K9me2, marks chromatin regions for cytosine methylation. Methylated by set-2 to form H3K36me. H3K36me represses gene expression. Methylated by dot-1 to form H3K79me. H3K79me is required for association of SIR proteins with telomeric regions and for telomeric silencing. The COMPASS-mediated formation of H3K4me2/3 and the dot-1-mediated formation of H3K79me require H2BK123ub1 (By similarity).</text>
</comment>
<comment type="PTM">
    <text evidence="1">Acetylation of histone H3 leads to transcriptional activation. H3K14ac formation by gcn-5 is promoted by H3S10ph. H3K14ac can also be formed by esa-1. H3K56ac formation occurs predominantly in newly synthesized H3 molecules during G1, S and G2/M of the cell cycle and may be involved in DNA repair (By similarity).</text>
</comment>
<comment type="similarity">
    <text evidence="4">Belongs to the histone H3 family.</text>
</comment>
<comment type="caution">
    <text evidence="4">To ensure consistency between histone entries, we follow the 'Brno' nomenclature for histone modifications, with positions referring to those used in the literature for the 'closest' model organism. Due to slight variations in histone sequences between organisms and to the presence of initiator methionine in UniProtKB/Swiss-Prot sequences, the actual positions of modified amino acids in the sequence generally differ. In this entry the following conventions are used: H3K4me1/2/3 = mono-, di- and trimethylated Lys-5; H3K9ac = acetylated Lys-10; H3K9me3 = trimethylated Lys-10; H3S10ph = phosphorylated Ser-11; H3K14ac = acetylated Lys-15; H3K14me2 = dimethylated Lys-15; H3K18ac = acetylated Lys-19; H3K18me1 = monomethylated Lys-19; H3K23ac = acetylated Lys-24; H3K23me1 = monomethylated Lys-24; H3K27ac = acetylated Lys-28; H3K27me1/2/3 = mono-, di- and trimethylated Lys-28; H3K36ac = acetylated Lys-37; H3K36me1/2/3 = mono-, di- and trimethylated Lys-37; H3K56ac = acetylated Lys-57; H3K64ac = acetylated Lys-65; H3K79me1/2/3 = mono-, di- and trimethylated Lys-80.</text>
</comment>
<name>H3_NEUCR</name>
<proteinExistence type="evidence at protein level"/>
<accession>P07041</accession>
<accession>Q7RV46</accession>
<accession>Q8WZD9</accession>
<dbReference type="EMBL" id="X01612">
    <property type="protein sequence ID" value="CAA25761.1"/>
    <property type="molecule type" value="Genomic_DNA"/>
</dbReference>
<dbReference type="EMBL" id="AY062173">
    <property type="protein sequence ID" value="AAL38973.1"/>
    <property type="molecule type" value="Genomic_DNA"/>
</dbReference>
<dbReference type="EMBL" id="AL670543">
    <property type="protein sequence ID" value="CAD21510.1"/>
    <property type="molecule type" value="Genomic_DNA"/>
</dbReference>
<dbReference type="EMBL" id="CM002237">
    <property type="protein sequence ID" value="EAA26767.1"/>
    <property type="molecule type" value="Genomic_DNA"/>
</dbReference>
<dbReference type="PIR" id="S07350">
    <property type="entry name" value="S07350"/>
</dbReference>
<dbReference type="RefSeq" id="XP_956003.1">
    <property type="nucleotide sequence ID" value="XM_950910.3"/>
</dbReference>
<dbReference type="SMR" id="P07041"/>
<dbReference type="DIP" id="DIP-39601N"/>
<dbReference type="FunCoup" id="P07041">
    <property type="interactions" value="792"/>
</dbReference>
<dbReference type="IntAct" id="P07041">
    <property type="interactions" value="2"/>
</dbReference>
<dbReference type="STRING" id="367110.P07041"/>
<dbReference type="PaxDb" id="5141-EFNCRP00000001782"/>
<dbReference type="EnsemblFungi" id="EAA26767">
    <property type="protein sequence ID" value="EAA26767"/>
    <property type="gene ID" value="NCU01635"/>
</dbReference>
<dbReference type="GeneID" id="3872150"/>
<dbReference type="KEGG" id="ncr:NCU01635"/>
<dbReference type="VEuPathDB" id="FungiDB:NCU01635"/>
<dbReference type="HOGENOM" id="CLU_078295_4_0_1"/>
<dbReference type="InParanoid" id="P07041"/>
<dbReference type="OrthoDB" id="842664at2759"/>
<dbReference type="Proteomes" id="UP000001805">
    <property type="component" value="Chromosome 6, Linkage Group II"/>
</dbReference>
<dbReference type="GO" id="GO:0000786">
    <property type="term" value="C:nucleosome"/>
    <property type="evidence" value="ECO:0007669"/>
    <property type="project" value="UniProtKB-KW"/>
</dbReference>
<dbReference type="GO" id="GO:0005634">
    <property type="term" value="C:nucleus"/>
    <property type="evidence" value="ECO:0000318"/>
    <property type="project" value="GO_Central"/>
</dbReference>
<dbReference type="GO" id="GO:0003677">
    <property type="term" value="F:DNA binding"/>
    <property type="evidence" value="ECO:0007669"/>
    <property type="project" value="UniProtKB-KW"/>
</dbReference>
<dbReference type="GO" id="GO:0046982">
    <property type="term" value="F:protein heterodimerization activity"/>
    <property type="evidence" value="ECO:0007669"/>
    <property type="project" value="InterPro"/>
</dbReference>
<dbReference type="GO" id="GO:0030527">
    <property type="term" value="F:structural constituent of chromatin"/>
    <property type="evidence" value="ECO:0007669"/>
    <property type="project" value="InterPro"/>
</dbReference>
<dbReference type="GO" id="GO:0009303">
    <property type="term" value="P:rRNA transcription"/>
    <property type="evidence" value="ECO:0000318"/>
    <property type="project" value="GO_Central"/>
</dbReference>
<dbReference type="CDD" id="cd22911">
    <property type="entry name" value="HFD_H3"/>
    <property type="match status" value="1"/>
</dbReference>
<dbReference type="FunFam" id="1.10.20.10:FF:000010">
    <property type="entry name" value="Histone H3"/>
    <property type="match status" value="1"/>
</dbReference>
<dbReference type="Gene3D" id="1.10.20.10">
    <property type="entry name" value="Histone, subunit A"/>
    <property type="match status" value="1"/>
</dbReference>
<dbReference type="InterPro" id="IPR009072">
    <property type="entry name" value="Histone-fold"/>
</dbReference>
<dbReference type="InterPro" id="IPR007125">
    <property type="entry name" value="Histone_H2A/H2B/H3"/>
</dbReference>
<dbReference type="InterPro" id="IPR000164">
    <property type="entry name" value="Histone_H3/CENP-A"/>
</dbReference>
<dbReference type="PANTHER" id="PTHR11426">
    <property type="entry name" value="HISTONE H3"/>
    <property type="match status" value="1"/>
</dbReference>
<dbReference type="Pfam" id="PF00125">
    <property type="entry name" value="Histone"/>
    <property type="match status" value="1"/>
</dbReference>
<dbReference type="PRINTS" id="PR00622">
    <property type="entry name" value="HISTONEH3"/>
</dbReference>
<dbReference type="SMART" id="SM00428">
    <property type="entry name" value="H3"/>
    <property type="match status" value="1"/>
</dbReference>
<dbReference type="SUPFAM" id="SSF47113">
    <property type="entry name" value="Histone-fold"/>
    <property type="match status" value="1"/>
</dbReference>
<dbReference type="PROSITE" id="PS00322">
    <property type="entry name" value="HISTONE_H3_1"/>
    <property type="match status" value="1"/>
</dbReference>
<dbReference type="PROSITE" id="PS00959">
    <property type="entry name" value="HISTONE_H3_2"/>
    <property type="match status" value="1"/>
</dbReference>
<feature type="initiator methionine" description="Removed" evidence="1">
    <location>
        <position position="1"/>
    </location>
</feature>
<feature type="chain" id="PRO_0000221364" description="Histone H3">
    <location>
        <begin position="2"/>
        <end position="136"/>
    </location>
</feature>
<feature type="region of interest" description="Disordered" evidence="2">
    <location>
        <begin position="1"/>
        <end position="43"/>
    </location>
</feature>
<feature type="modified residue" description="N6,N6,N6-trimethyllysine; alternate" evidence="1">
    <location>
        <position position="5"/>
    </location>
</feature>
<feature type="modified residue" description="N6,N6-dimethyllysine; alternate" evidence="1">
    <location>
        <position position="5"/>
    </location>
</feature>
<feature type="modified residue" description="N6-methyllysine; alternate" evidence="1">
    <location>
        <position position="5"/>
    </location>
</feature>
<feature type="modified residue" description="N6,N6,N6-trimethyllysine; alternate" evidence="3">
    <location>
        <position position="10"/>
    </location>
</feature>
<feature type="modified residue" description="N6-acetyllysine; alternate" evidence="1">
    <location>
        <position position="10"/>
    </location>
</feature>
<feature type="modified residue" description="Phosphoserine" evidence="1">
    <location>
        <position position="11"/>
    </location>
</feature>
<feature type="modified residue" description="N6,N6-dimethyllysine; alternate" evidence="1">
    <location>
        <position position="15"/>
    </location>
</feature>
<feature type="modified residue" description="N6-acetyllysine; alternate" evidence="1">
    <location>
        <position position="15"/>
    </location>
</feature>
<feature type="modified residue" description="N6-methyllysine; alternate" evidence="1">
    <location>
        <position position="15"/>
    </location>
</feature>
<feature type="modified residue" description="N6-acetyllysine; alternate" evidence="1">
    <location>
        <position position="19"/>
    </location>
</feature>
<feature type="modified residue" description="N6-methyllysine; alternate" evidence="1">
    <location>
        <position position="19"/>
    </location>
</feature>
<feature type="modified residue" description="N6-acetyllysine; alternate" evidence="1">
    <location>
        <position position="24"/>
    </location>
</feature>
<feature type="modified residue" description="N6-methyllysine; alternate" evidence="1">
    <location>
        <position position="24"/>
    </location>
</feature>
<feature type="modified residue" description="N6,N6,N6-trimethyllysine; alternate" evidence="1">
    <location>
        <position position="28"/>
    </location>
</feature>
<feature type="modified residue" description="N6,N6-dimethyllysine; alternate" evidence="1">
    <location>
        <position position="28"/>
    </location>
</feature>
<feature type="modified residue" description="N6-acetyllysine; alternate" evidence="1">
    <location>
        <position position="28"/>
    </location>
</feature>
<feature type="modified residue" description="N6-methyllysine; alternate" evidence="1">
    <location>
        <position position="28"/>
    </location>
</feature>
<feature type="modified residue" description="N6,N6,N6-trimethyllysine; alternate" evidence="1">
    <location>
        <position position="37"/>
    </location>
</feature>
<feature type="modified residue" description="N6,N6-dimethyllysine; alternate" evidence="1">
    <location>
        <position position="37"/>
    </location>
</feature>
<feature type="modified residue" description="N6-acetyllysine; alternate" evidence="1">
    <location>
        <position position="37"/>
    </location>
</feature>
<feature type="modified residue" description="N6-methyllysine; alternate" evidence="1">
    <location>
        <position position="37"/>
    </location>
</feature>
<feature type="modified residue" description="N6-acetyllysine" evidence="1">
    <location>
        <position position="57"/>
    </location>
</feature>
<feature type="modified residue" description="N6-acetyllysine" evidence="1">
    <location>
        <position position="65"/>
    </location>
</feature>
<feature type="modified residue" description="N6,N6,N6-trimethyllysine; alternate" evidence="1">
    <location>
        <position position="80"/>
    </location>
</feature>
<feature type="modified residue" description="N6,N6-dimethyllysine; alternate" evidence="1">
    <location>
        <position position="80"/>
    </location>
</feature>
<feature type="modified residue" description="N6-methyllysine; alternate" evidence="1">
    <location>
        <position position="80"/>
    </location>
</feature>
<feature type="sequence conflict" description="In Ref. 1; CAA25761." evidence="4" ref="1">
    <original>A</original>
    <variation>L</variation>
    <location>
        <position position="92"/>
    </location>
</feature>
<reference key="1">
    <citation type="journal article" date="1983" name="Nucleic Acids Res.">
        <title>The genes coding for histone H3 and H4 in Neurospora crassa are unique and contain intervening sequences.</title>
        <authorList>
            <person name="Woudt L.P."/>
            <person name="Pastink A."/>
            <person name="Kempers-Veenstra A.E."/>
            <person name="Jansen A.E.M."/>
            <person name="Mager W.H."/>
            <person name="Planta R.J."/>
        </authorList>
    </citation>
    <scope>NUCLEOTIDE SEQUENCE [GENOMIC DNA]</scope>
</reference>
<reference key="2">
    <citation type="journal article" date="2002" name="Genetics">
        <title>Identification and characterization of the genes encoding the core histones and histone variants of Neurospora crassa.</title>
        <authorList>
            <person name="Hays S.M."/>
            <person name="Swanson J."/>
            <person name="Selker E.U."/>
        </authorList>
    </citation>
    <scope>NUCLEOTIDE SEQUENCE [GENOMIC DNA]</scope>
</reference>
<reference key="3">
    <citation type="journal article" date="2003" name="Nucleic Acids Res.">
        <title>What's in the genome of a filamentous fungus? Analysis of the Neurospora genome sequence.</title>
        <authorList>
            <person name="Mannhaupt G."/>
            <person name="Montrone C."/>
            <person name="Haase D."/>
            <person name="Mewes H.-W."/>
            <person name="Aign V."/>
            <person name="Hoheisel J.D."/>
            <person name="Fartmann B."/>
            <person name="Nyakatura G."/>
            <person name="Kempken F."/>
            <person name="Maier J."/>
            <person name="Schulte U."/>
        </authorList>
    </citation>
    <scope>NUCLEOTIDE SEQUENCE [LARGE SCALE GENOMIC DNA]</scope>
    <source>
        <strain>ATCC 24698 / 74-OR23-1A / CBS 708.71 / DSM 1257 / FGSC 987</strain>
    </source>
</reference>
<reference key="4">
    <citation type="journal article" date="2003" name="Nature">
        <title>The genome sequence of the filamentous fungus Neurospora crassa.</title>
        <authorList>
            <person name="Galagan J.E."/>
            <person name="Calvo S.E."/>
            <person name="Borkovich K.A."/>
            <person name="Selker E.U."/>
            <person name="Read N.D."/>
            <person name="Jaffe D.B."/>
            <person name="FitzHugh W."/>
            <person name="Ma L.-J."/>
            <person name="Smirnov S."/>
            <person name="Purcell S."/>
            <person name="Rehman B."/>
            <person name="Elkins T."/>
            <person name="Engels R."/>
            <person name="Wang S."/>
            <person name="Nielsen C.B."/>
            <person name="Butler J."/>
            <person name="Endrizzi M."/>
            <person name="Qui D."/>
            <person name="Ianakiev P."/>
            <person name="Bell-Pedersen D."/>
            <person name="Nelson M.A."/>
            <person name="Werner-Washburne M."/>
            <person name="Selitrennikoff C.P."/>
            <person name="Kinsey J.A."/>
            <person name="Braun E.L."/>
            <person name="Zelter A."/>
            <person name="Schulte U."/>
            <person name="Kothe G.O."/>
            <person name="Jedd G."/>
            <person name="Mewes H.-W."/>
            <person name="Staben C."/>
            <person name="Marcotte E."/>
            <person name="Greenberg D."/>
            <person name="Roy A."/>
            <person name="Foley K."/>
            <person name="Naylor J."/>
            <person name="Stange-Thomann N."/>
            <person name="Barrett R."/>
            <person name="Gnerre S."/>
            <person name="Kamal M."/>
            <person name="Kamvysselis M."/>
            <person name="Mauceli E.W."/>
            <person name="Bielke C."/>
            <person name="Rudd S."/>
            <person name="Frishman D."/>
            <person name="Krystofova S."/>
            <person name="Rasmussen C."/>
            <person name="Metzenberg R.L."/>
            <person name="Perkins D.D."/>
            <person name="Kroken S."/>
            <person name="Cogoni C."/>
            <person name="Macino G."/>
            <person name="Catcheside D.E.A."/>
            <person name="Li W."/>
            <person name="Pratt R.J."/>
            <person name="Osmani S.A."/>
            <person name="DeSouza C.P.C."/>
            <person name="Glass N.L."/>
            <person name="Orbach M.J."/>
            <person name="Berglund J.A."/>
            <person name="Voelker R."/>
            <person name="Yarden O."/>
            <person name="Plamann M."/>
            <person name="Seiler S."/>
            <person name="Dunlap J.C."/>
            <person name="Radford A."/>
            <person name="Aramayo R."/>
            <person name="Natvig D.O."/>
            <person name="Alex L.A."/>
            <person name="Mannhaupt G."/>
            <person name="Ebbole D.J."/>
            <person name="Freitag M."/>
            <person name="Paulsen I."/>
            <person name="Sachs M.S."/>
            <person name="Lander E.S."/>
            <person name="Nusbaum C."/>
            <person name="Birren B.W."/>
        </authorList>
    </citation>
    <scope>NUCLEOTIDE SEQUENCE [LARGE SCALE GENOMIC DNA]</scope>
    <source>
        <strain>ATCC 24698 / 74-OR23-1A / CBS 708.71 / DSM 1257 / FGSC 987</strain>
    </source>
</reference>
<reference key="5">
    <citation type="journal article" date="2003" name="Nat. Genet.">
        <title>Trimethylated lysine 9 of histone H3 is a mark for DNA methylation in Neurospora crassa.</title>
        <authorList>
            <person name="Tamaru H."/>
            <person name="Zhang X."/>
            <person name="McMillen D."/>
            <person name="Singh P.B."/>
            <person name="Nakayama J."/>
            <person name="Grewal S.I."/>
            <person name="Allis C.D."/>
            <person name="Cheng X."/>
            <person name="Selker E.U."/>
        </authorList>
    </citation>
    <scope>METHYLATION AT LYS-10</scope>
</reference>
<organism>
    <name type="scientific">Neurospora crassa (strain ATCC 24698 / 74-OR23-1A / CBS 708.71 / DSM 1257 / FGSC 987)</name>
    <dbReference type="NCBI Taxonomy" id="367110"/>
    <lineage>
        <taxon>Eukaryota</taxon>
        <taxon>Fungi</taxon>
        <taxon>Dikarya</taxon>
        <taxon>Ascomycota</taxon>
        <taxon>Pezizomycotina</taxon>
        <taxon>Sordariomycetes</taxon>
        <taxon>Sordariomycetidae</taxon>
        <taxon>Sordariales</taxon>
        <taxon>Sordariaceae</taxon>
        <taxon>Neurospora</taxon>
    </lineage>
</organism>